<evidence type="ECO:0000255" key="1">
    <source>
        <dbReference type="HAMAP-Rule" id="MF_01000"/>
    </source>
</evidence>
<protein>
    <recommendedName>
        <fullName evidence="1">Vitamin B12-binding protein</fullName>
    </recommendedName>
</protein>
<accession>Q7MNT2</accession>
<dbReference type="EMBL" id="BA000037">
    <property type="protein sequence ID" value="BAC93397.1"/>
    <property type="molecule type" value="Genomic_DNA"/>
</dbReference>
<dbReference type="RefSeq" id="WP_011149515.1">
    <property type="nucleotide sequence ID" value="NC_005139.1"/>
</dbReference>
<dbReference type="SMR" id="Q7MNT2"/>
<dbReference type="STRING" id="672.VV93_v1c05730"/>
<dbReference type="KEGG" id="vvy:VV0633"/>
<dbReference type="PATRIC" id="fig|196600.6.peg.652"/>
<dbReference type="eggNOG" id="COG0614">
    <property type="taxonomic scope" value="Bacteria"/>
</dbReference>
<dbReference type="HOGENOM" id="CLU_038034_2_5_6"/>
<dbReference type="Proteomes" id="UP000002675">
    <property type="component" value="Chromosome I"/>
</dbReference>
<dbReference type="GO" id="GO:0042597">
    <property type="term" value="C:periplasmic space"/>
    <property type="evidence" value="ECO:0007669"/>
    <property type="project" value="UniProtKB-SubCell"/>
</dbReference>
<dbReference type="GO" id="GO:0031419">
    <property type="term" value="F:cobalamin binding"/>
    <property type="evidence" value="ECO:0007669"/>
    <property type="project" value="InterPro"/>
</dbReference>
<dbReference type="GO" id="GO:0015889">
    <property type="term" value="P:cobalamin transport"/>
    <property type="evidence" value="ECO:0007669"/>
    <property type="project" value="UniProtKB-UniRule"/>
</dbReference>
<dbReference type="CDD" id="cd01144">
    <property type="entry name" value="BtuF"/>
    <property type="match status" value="1"/>
</dbReference>
<dbReference type="Gene3D" id="3.40.50.1980">
    <property type="entry name" value="Nitrogenase molybdenum iron protein domain"/>
    <property type="match status" value="2"/>
</dbReference>
<dbReference type="HAMAP" id="MF_01000">
    <property type="entry name" value="BtuF"/>
    <property type="match status" value="1"/>
</dbReference>
<dbReference type="InterPro" id="IPR050902">
    <property type="entry name" value="ABC_Transporter_SBP"/>
</dbReference>
<dbReference type="InterPro" id="IPR002491">
    <property type="entry name" value="ABC_transptr_periplasmic_BD"/>
</dbReference>
<dbReference type="InterPro" id="IPR023544">
    <property type="entry name" value="ABC_transptr_vit_B12-bd"/>
</dbReference>
<dbReference type="InterPro" id="IPR054828">
    <property type="entry name" value="Vit_B12_bind_prot"/>
</dbReference>
<dbReference type="NCBIfam" id="NF002894">
    <property type="entry name" value="PRK03379.1"/>
    <property type="match status" value="1"/>
</dbReference>
<dbReference type="NCBIfam" id="NF038402">
    <property type="entry name" value="TroA_like"/>
    <property type="match status" value="1"/>
</dbReference>
<dbReference type="PANTHER" id="PTHR30535:SF34">
    <property type="entry name" value="MOLYBDATE-BINDING PROTEIN MOLA"/>
    <property type="match status" value="1"/>
</dbReference>
<dbReference type="PANTHER" id="PTHR30535">
    <property type="entry name" value="VITAMIN B12-BINDING PROTEIN"/>
    <property type="match status" value="1"/>
</dbReference>
<dbReference type="Pfam" id="PF01497">
    <property type="entry name" value="Peripla_BP_2"/>
    <property type="match status" value="1"/>
</dbReference>
<dbReference type="SUPFAM" id="SSF53807">
    <property type="entry name" value="Helical backbone' metal receptor"/>
    <property type="match status" value="1"/>
</dbReference>
<dbReference type="PROSITE" id="PS50983">
    <property type="entry name" value="FE_B12_PBP"/>
    <property type="match status" value="1"/>
</dbReference>
<reference key="1">
    <citation type="journal article" date="2003" name="Genome Res.">
        <title>Comparative genome analysis of Vibrio vulnificus, a marine pathogen.</title>
        <authorList>
            <person name="Chen C.-Y."/>
            <person name="Wu K.-M."/>
            <person name="Chang Y.-C."/>
            <person name="Chang C.-H."/>
            <person name="Tsai H.-C."/>
            <person name="Liao T.-L."/>
            <person name="Liu Y.-M."/>
            <person name="Chen H.-J."/>
            <person name="Shen A.B.-T."/>
            <person name="Li J.-C."/>
            <person name="Su T.-L."/>
            <person name="Shao C.-P."/>
            <person name="Lee C.-T."/>
            <person name="Hor L.-I."/>
            <person name="Tsai S.-F."/>
        </authorList>
    </citation>
    <scope>NUCLEOTIDE SEQUENCE [LARGE SCALE GENOMIC DNA]</scope>
    <source>
        <strain>YJ016</strain>
    </source>
</reference>
<proteinExistence type="inferred from homology"/>
<gene>
    <name evidence="1" type="primary">btuF</name>
    <name type="ordered locus">VV0633</name>
</gene>
<name>BTUF_VIBVY</name>
<feature type="signal peptide" evidence="1">
    <location>
        <begin position="1"/>
        <end position="18"/>
    </location>
</feature>
<feature type="chain" id="PRO_0000003511" description="Vitamin B12-binding protein">
    <location>
        <begin position="19"/>
        <end position="273"/>
    </location>
</feature>
<feature type="domain" description="Fe/B12 periplasmic-binding" evidence="1">
    <location>
        <begin position="23"/>
        <end position="273"/>
    </location>
</feature>
<feature type="site" description="Important for BtuC binding" evidence="1">
    <location>
        <position position="72"/>
    </location>
</feature>
<feature type="site" description="Important for BtuC binding" evidence="1">
    <location>
        <position position="202"/>
    </location>
</feature>
<feature type="disulfide bond" evidence="1">
    <location>
        <begin position="183"/>
        <end position="263"/>
    </location>
</feature>
<organism>
    <name type="scientific">Vibrio vulnificus (strain YJ016)</name>
    <dbReference type="NCBI Taxonomy" id="196600"/>
    <lineage>
        <taxon>Bacteria</taxon>
        <taxon>Pseudomonadati</taxon>
        <taxon>Pseudomonadota</taxon>
        <taxon>Gammaproteobacteria</taxon>
        <taxon>Vibrionales</taxon>
        <taxon>Vibrionaceae</taxon>
        <taxon>Vibrio</taxon>
    </lineage>
</organism>
<comment type="function">
    <text evidence="1">Part of the ABC transporter complex BtuCDF involved in vitamin B12 import. Binds vitamin B12 and delivers it to the periplasmic surface of BtuC.</text>
</comment>
<comment type="subunit">
    <text evidence="1">The complex is composed of two ATP-binding proteins (BtuD), two transmembrane proteins (BtuC) and a solute-binding protein (BtuF).</text>
</comment>
<comment type="subcellular location">
    <subcellularLocation>
        <location evidence="1">Periplasm</location>
    </subcellularLocation>
</comment>
<comment type="similarity">
    <text evidence="1">Belongs to the BtuF family.</text>
</comment>
<sequence length="273" mass="30896">MMKTLSSLLLLFSVSLQAAPIERVISLAPHATEIAYAAGLGDKLIAVSEMSDYPEAAKKLEKVSNYKGINLEKIITLKPDLILAWPAGNPAKELEKLEQFGFKIYYSQTKSLKDIGDNIEQLSQYSDDPQIGLNNARDYRTHLEALRAKYQNLPKTRYFYQLSDTPIITVAGQNWPTEVFRFCGGENVFDGASAPYPQVSIEQVILKRPQAMFVSPHAIQNNGMWSPWVEEIPALKNAHFWQLNSDWLNRPTPRTLLAIEQVCEHFASIEQKR</sequence>
<keyword id="KW-1015">Disulfide bond</keyword>
<keyword id="KW-0574">Periplasm</keyword>
<keyword id="KW-0732">Signal</keyword>
<keyword id="KW-0813">Transport</keyword>